<accession>Q8LDI5</accession>
<accession>Q2HIL3</accession>
<accession>Q9SYX9</accession>
<accession>Q9XH49</accession>
<feature type="chain" id="PRO_0000120065" description="Thioredoxin-like protein CXXS1">
    <location>
        <begin position="1"/>
        <end position="118"/>
    </location>
</feature>
<feature type="domain" description="Thioredoxin" evidence="1">
    <location>
        <begin position="2"/>
        <end position="110"/>
    </location>
</feature>
<feature type="sequence conflict" description="In Ref. 5; AAM63200." evidence="3" ref="5">
    <original>N</original>
    <variation>D</variation>
    <location>
        <position position="14"/>
    </location>
</feature>
<feature type="sequence conflict" description="In Ref. 1; AAD37583." evidence="3" ref="1">
    <original>D</original>
    <variation>G</variation>
    <location>
        <position position="86"/>
    </location>
</feature>
<evidence type="ECO:0000255" key="1">
    <source>
        <dbReference type="PROSITE-ProRule" id="PRU00691"/>
    </source>
</evidence>
<evidence type="ECO:0000269" key="2">
    <source>
    </source>
</evidence>
<evidence type="ECO:0000305" key="3"/>
<reference key="1">
    <citation type="journal article" date="1999" name="Trends Plant Sci.">
        <title>Plant thioredoxins and glutaredoxins: identity and putative roles.</title>
        <authorList>
            <person name="Meyer Y."/>
            <person name="Verdoucq L."/>
            <person name="Vignols F."/>
        </authorList>
    </citation>
    <scope>NUCLEOTIDE SEQUENCE [GENOMIC DNA / MRNA]</scope>
</reference>
<reference key="2">
    <citation type="journal article" date="2000" name="Nature">
        <title>Sequence and analysis of chromosome 1 of the plant Arabidopsis thaliana.</title>
        <authorList>
            <person name="Theologis A."/>
            <person name="Ecker J.R."/>
            <person name="Palm C.J."/>
            <person name="Federspiel N.A."/>
            <person name="Kaul S."/>
            <person name="White O."/>
            <person name="Alonso J."/>
            <person name="Altafi H."/>
            <person name="Araujo R."/>
            <person name="Bowman C.L."/>
            <person name="Brooks S.Y."/>
            <person name="Buehler E."/>
            <person name="Chan A."/>
            <person name="Chao Q."/>
            <person name="Chen H."/>
            <person name="Cheuk R.F."/>
            <person name="Chin C.W."/>
            <person name="Chung M.K."/>
            <person name="Conn L."/>
            <person name="Conway A.B."/>
            <person name="Conway A.R."/>
            <person name="Creasy T.H."/>
            <person name="Dewar K."/>
            <person name="Dunn P."/>
            <person name="Etgu P."/>
            <person name="Feldblyum T.V."/>
            <person name="Feng J.-D."/>
            <person name="Fong B."/>
            <person name="Fujii C.Y."/>
            <person name="Gill J.E."/>
            <person name="Goldsmith A.D."/>
            <person name="Haas B."/>
            <person name="Hansen N.F."/>
            <person name="Hughes B."/>
            <person name="Huizar L."/>
            <person name="Hunter J.L."/>
            <person name="Jenkins J."/>
            <person name="Johnson-Hopson C."/>
            <person name="Khan S."/>
            <person name="Khaykin E."/>
            <person name="Kim C.J."/>
            <person name="Koo H.L."/>
            <person name="Kremenetskaia I."/>
            <person name="Kurtz D.B."/>
            <person name="Kwan A."/>
            <person name="Lam B."/>
            <person name="Langin-Hooper S."/>
            <person name="Lee A."/>
            <person name="Lee J.M."/>
            <person name="Lenz C.A."/>
            <person name="Li J.H."/>
            <person name="Li Y.-P."/>
            <person name="Lin X."/>
            <person name="Liu S.X."/>
            <person name="Liu Z.A."/>
            <person name="Luros J.S."/>
            <person name="Maiti R."/>
            <person name="Marziali A."/>
            <person name="Militscher J."/>
            <person name="Miranda M."/>
            <person name="Nguyen M."/>
            <person name="Nierman W.C."/>
            <person name="Osborne B.I."/>
            <person name="Pai G."/>
            <person name="Peterson J."/>
            <person name="Pham P.K."/>
            <person name="Rizzo M."/>
            <person name="Rooney T."/>
            <person name="Rowley D."/>
            <person name="Sakano H."/>
            <person name="Salzberg S.L."/>
            <person name="Schwartz J.R."/>
            <person name="Shinn P."/>
            <person name="Southwick A.M."/>
            <person name="Sun H."/>
            <person name="Tallon L.J."/>
            <person name="Tambunga G."/>
            <person name="Toriumi M.J."/>
            <person name="Town C.D."/>
            <person name="Utterback T."/>
            <person name="Van Aken S."/>
            <person name="Vaysberg M."/>
            <person name="Vysotskaia V.S."/>
            <person name="Walker M."/>
            <person name="Wu D."/>
            <person name="Yu G."/>
            <person name="Fraser C.M."/>
            <person name="Venter J.C."/>
            <person name="Davis R.W."/>
        </authorList>
    </citation>
    <scope>NUCLEOTIDE SEQUENCE [LARGE SCALE GENOMIC DNA]</scope>
    <source>
        <strain>cv. Columbia</strain>
    </source>
</reference>
<reference key="3">
    <citation type="journal article" date="2017" name="Plant J.">
        <title>Araport11: a complete reannotation of the Arabidopsis thaliana reference genome.</title>
        <authorList>
            <person name="Cheng C.Y."/>
            <person name="Krishnakumar V."/>
            <person name="Chan A.P."/>
            <person name="Thibaud-Nissen F."/>
            <person name="Schobel S."/>
            <person name="Town C.D."/>
        </authorList>
    </citation>
    <scope>GENOME REANNOTATION</scope>
    <source>
        <strain>cv. Columbia</strain>
    </source>
</reference>
<reference key="4">
    <citation type="submission" date="2006-02" db="EMBL/GenBank/DDBJ databases">
        <title>Arabidopsis ORF clones.</title>
        <authorList>
            <person name="Shinn P."/>
            <person name="Chen H."/>
            <person name="Kim C.J."/>
            <person name="Ecker J.R."/>
        </authorList>
    </citation>
    <scope>NUCLEOTIDE SEQUENCE [LARGE SCALE MRNA]</scope>
    <source>
        <strain>cv. Columbia</strain>
    </source>
</reference>
<reference key="5">
    <citation type="submission" date="2002-03" db="EMBL/GenBank/DDBJ databases">
        <title>Full-length cDNA from Arabidopsis thaliana.</title>
        <authorList>
            <person name="Brover V.V."/>
            <person name="Troukhan M.E."/>
            <person name="Alexandrov N.A."/>
            <person name="Lu Y.-P."/>
            <person name="Flavell R.B."/>
            <person name="Feldmann K.A."/>
        </authorList>
    </citation>
    <scope>NUCLEOTIDE SEQUENCE [LARGE SCALE MRNA]</scope>
</reference>
<reference key="6">
    <citation type="journal article" date="2008" name="Physiol. Plantarum">
        <title>AtCXXS: atypical members of the Arabidopsis thaliana thioredoxin h family with a remarkably high disulfide isomerase activity.</title>
        <authorList>
            <person name="Serrato A.J."/>
            <person name="Guilleminot J."/>
            <person name="Meyer Y."/>
            <person name="Vignols F."/>
        </authorList>
    </citation>
    <scope>FUNCTION</scope>
    <scope>SUBCELLULAR LOCATION</scope>
    <scope>TISSUE SPECIFICITY</scope>
</reference>
<reference key="7">
    <citation type="journal article" date="2009" name="Mol. Plant">
        <title>Comparative genomic study of the thioredoxin family in photosynthetic organisms with emphasis on Populus trichocarpa.</title>
        <authorList>
            <person name="Chibani K."/>
            <person name="Wingsle G."/>
            <person name="Jacquot J.P."/>
            <person name="Gelhaye E."/>
            <person name="Rouhier N."/>
        </authorList>
    </citation>
    <scope>GENE FAMILY</scope>
    <scope>NOMENCLATURE</scope>
</reference>
<proteinExistence type="evidence at transcript level"/>
<protein>
    <recommendedName>
        <fullName>Thioredoxin-like protein CXXS1</fullName>
        <shortName>AtCXXS1</shortName>
    </recommendedName>
    <alternativeName>
        <fullName>Mono-cysteine thioredoxin 1</fullName>
    </alternativeName>
</protein>
<comment type="function">
    <text evidence="2">Possesses low disulfide reductase activity, but efficient protein disulfide isomerase activity. Does not possess deglutathionylation activity.</text>
</comment>
<comment type="subcellular location">
    <subcellularLocation>
        <location evidence="2">Cytoplasm</location>
    </subcellularLocation>
</comment>
<comment type="tissue specificity">
    <text evidence="2">Ubiquitous.</text>
</comment>
<comment type="similarity">
    <text evidence="3">Belongs to the thioredoxin family.</text>
</comment>
<comment type="caution">
    <text evidence="3">Lacks the conserved cysteine (here Ser-39), present in the redox-active center, which is one of the conserved features of the thioredoxin family.</text>
</comment>
<gene>
    <name type="primary">CXXS1</name>
    <name type="ordered locus">At1g11530</name>
    <name type="ORF">T23J18.19</name>
</gene>
<dbReference type="EMBL" id="AF144390">
    <property type="protein sequence ID" value="AAD35008.1"/>
    <property type="molecule type" value="mRNA"/>
</dbReference>
<dbReference type="EMBL" id="AF144392">
    <property type="protein sequence ID" value="AAD37583.1"/>
    <property type="molecule type" value="Genomic_DNA"/>
</dbReference>
<dbReference type="EMBL" id="AC011661">
    <property type="protein sequence ID" value="AAF16634.1"/>
    <property type="molecule type" value="Genomic_DNA"/>
</dbReference>
<dbReference type="EMBL" id="CP002684">
    <property type="protein sequence ID" value="AEE28748.1"/>
    <property type="molecule type" value="Genomic_DNA"/>
</dbReference>
<dbReference type="EMBL" id="BT024568">
    <property type="protein sequence ID" value="ABD38907.1"/>
    <property type="molecule type" value="mRNA"/>
</dbReference>
<dbReference type="EMBL" id="AY085990">
    <property type="protein sequence ID" value="AAM63200.1"/>
    <property type="molecule type" value="mRNA"/>
</dbReference>
<dbReference type="PIR" id="F86248">
    <property type="entry name" value="F86248"/>
</dbReference>
<dbReference type="RefSeq" id="NP_172620.1">
    <property type="nucleotide sequence ID" value="NM_101026.3"/>
</dbReference>
<dbReference type="SMR" id="Q8LDI5"/>
<dbReference type="FunCoup" id="Q8LDI5">
    <property type="interactions" value="44"/>
</dbReference>
<dbReference type="STRING" id="3702.Q8LDI5"/>
<dbReference type="PaxDb" id="3702-AT1G11530.1"/>
<dbReference type="ProteomicsDB" id="220379"/>
<dbReference type="EnsemblPlants" id="AT1G11530.1">
    <property type="protein sequence ID" value="AT1G11530.1"/>
    <property type="gene ID" value="AT1G11530"/>
</dbReference>
<dbReference type="GeneID" id="837696"/>
<dbReference type="Gramene" id="AT1G11530.1">
    <property type="protein sequence ID" value="AT1G11530.1"/>
    <property type="gene ID" value="AT1G11530"/>
</dbReference>
<dbReference type="KEGG" id="ath:AT1G11530"/>
<dbReference type="Araport" id="AT1G11530"/>
<dbReference type="TAIR" id="AT1G11530">
    <property type="gene designation" value="CXXS1"/>
</dbReference>
<dbReference type="eggNOG" id="KOG0907">
    <property type="taxonomic scope" value="Eukaryota"/>
</dbReference>
<dbReference type="HOGENOM" id="CLU_090389_14_1_1"/>
<dbReference type="InParanoid" id="Q8LDI5"/>
<dbReference type="OMA" id="WCIPSVF"/>
<dbReference type="OrthoDB" id="10263751at2759"/>
<dbReference type="PhylomeDB" id="Q8LDI5"/>
<dbReference type="PRO" id="PR:Q8LDI5"/>
<dbReference type="Proteomes" id="UP000006548">
    <property type="component" value="Chromosome 1"/>
</dbReference>
<dbReference type="ExpressionAtlas" id="Q8LDI5">
    <property type="expression patterns" value="baseline and differential"/>
</dbReference>
<dbReference type="GO" id="GO:0005829">
    <property type="term" value="C:cytosol"/>
    <property type="evidence" value="ECO:0000314"/>
    <property type="project" value="TAIR"/>
</dbReference>
<dbReference type="GO" id="GO:0005576">
    <property type="term" value="C:extracellular region"/>
    <property type="evidence" value="ECO:0007005"/>
    <property type="project" value="TAIR"/>
</dbReference>
<dbReference type="GO" id="GO:0003756">
    <property type="term" value="F:protein disulfide isomerase activity"/>
    <property type="evidence" value="ECO:0000314"/>
    <property type="project" value="TAIR"/>
</dbReference>
<dbReference type="CDD" id="cd02947">
    <property type="entry name" value="TRX_family"/>
    <property type="match status" value="1"/>
</dbReference>
<dbReference type="FunFam" id="3.40.30.10:FF:000597">
    <property type="entry name" value="Thioredoxin-like protein CXXS1"/>
    <property type="match status" value="1"/>
</dbReference>
<dbReference type="Gene3D" id="3.40.30.10">
    <property type="entry name" value="Glutaredoxin"/>
    <property type="match status" value="1"/>
</dbReference>
<dbReference type="InterPro" id="IPR036249">
    <property type="entry name" value="Thioredoxin-like_sf"/>
</dbReference>
<dbReference type="InterPro" id="IPR013766">
    <property type="entry name" value="Thioredoxin_domain"/>
</dbReference>
<dbReference type="InterPro" id="IPR050620">
    <property type="entry name" value="Thioredoxin_H-type-like"/>
</dbReference>
<dbReference type="PANTHER" id="PTHR10438">
    <property type="entry name" value="THIOREDOXIN"/>
    <property type="match status" value="1"/>
</dbReference>
<dbReference type="PANTHER" id="PTHR10438:SF433">
    <property type="entry name" value="THIOREDOXIN-LIKE PROTEIN CXXS1"/>
    <property type="match status" value="1"/>
</dbReference>
<dbReference type="Pfam" id="PF00085">
    <property type="entry name" value="Thioredoxin"/>
    <property type="match status" value="1"/>
</dbReference>
<dbReference type="SUPFAM" id="SSF52833">
    <property type="entry name" value="Thioredoxin-like"/>
    <property type="match status" value="1"/>
</dbReference>
<dbReference type="PROSITE" id="PS51352">
    <property type="entry name" value="THIOREDOXIN_2"/>
    <property type="match status" value="1"/>
</dbReference>
<keyword id="KW-0963">Cytoplasm</keyword>
<keyword id="KW-0413">Isomerase</keyword>
<keyword id="KW-1185">Reference proteome</keyword>
<sequence>MARVVKIDSAESWNFYVSQAKNQNCPIVAHFTALWCIPSVFMNSFFEELAFNYKDALFLIVDVDEVKEVASQLEVKAMPTFLFLKDGNAMDKLVGANPDEIKKRVDGFVQSSRVVHIA</sequence>
<name>CXXS1_ARATH</name>
<organism>
    <name type="scientific">Arabidopsis thaliana</name>
    <name type="common">Mouse-ear cress</name>
    <dbReference type="NCBI Taxonomy" id="3702"/>
    <lineage>
        <taxon>Eukaryota</taxon>
        <taxon>Viridiplantae</taxon>
        <taxon>Streptophyta</taxon>
        <taxon>Embryophyta</taxon>
        <taxon>Tracheophyta</taxon>
        <taxon>Spermatophyta</taxon>
        <taxon>Magnoliopsida</taxon>
        <taxon>eudicotyledons</taxon>
        <taxon>Gunneridae</taxon>
        <taxon>Pentapetalae</taxon>
        <taxon>rosids</taxon>
        <taxon>malvids</taxon>
        <taxon>Brassicales</taxon>
        <taxon>Brassicaceae</taxon>
        <taxon>Camelineae</taxon>
        <taxon>Arabidopsis</taxon>
    </lineage>
</organism>